<organism>
    <name type="scientific">Pseudoalteromonas atlantica (strain T6c / ATCC BAA-1087)</name>
    <dbReference type="NCBI Taxonomy" id="3042615"/>
    <lineage>
        <taxon>Bacteria</taxon>
        <taxon>Pseudomonadati</taxon>
        <taxon>Pseudomonadota</taxon>
        <taxon>Gammaproteobacteria</taxon>
        <taxon>Alteromonadales</taxon>
        <taxon>Alteromonadaceae</taxon>
        <taxon>Paraglaciecola</taxon>
    </lineage>
</organism>
<feature type="chain" id="PRO_1000023404" description="Translational regulator CsrA">
    <location>
        <begin position="1"/>
        <end position="71"/>
    </location>
</feature>
<dbReference type="EMBL" id="CP000388">
    <property type="protein sequence ID" value="ABG41522.1"/>
    <property type="molecule type" value="Genomic_DNA"/>
</dbReference>
<dbReference type="RefSeq" id="WP_006993689.1">
    <property type="nucleotide sequence ID" value="NC_008228.1"/>
</dbReference>
<dbReference type="SMR" id="Q15RG6"/>
<dbReference type="STRING" id="342610.Patl_3014"/>
<dbReference type="KEGG" id="pat:Patl_3014"/>
<dbReference type="eggNOG" id="COG1551">
    <property type="taxonomic scope" value="Bacteria"/>
</dbReference>
<dbReference type="HOGENOM" id="CLU_164837_2_1_6"/>
<dbReference type="OrthoDB" id="9809061at2"/>
<dbReference type="Proteomes" id="UP000001981">
    <property type="component" value="Chromosome"/>
</dbReference>
<dbReference type="GO" id="GO:0005829">
    <property type="term" value="C:cytosol"/>
    <property type="evidence" value="ECO:0007669"/>
    <property type="project" value="TreeGrafter"/>
</dbReference>
<dbReference type="GO" id="GO:0048027">
    <property type="term" value="F:mRNA 5'-UTR binding"/>
    <property type="evidence" value="ECO:0007669"/>
    <property type="project" value="UniProtKB-UniRule"/>
</dbReference>
<dbReference type="GO" id="GO:0006402">
    <property type="term" value="P:mRNA catabolic process"/>
    <property type="evidence" value="ECO:0007669"/>
    <property type="project" value="InterPro"/>
</dbReference>
<dbReference type="GO" id="GO:0045947">
    <property type="term" value="P:negative regulation of translational initiation"/>
    <property type="evidence" value="ECO:0007669"/>
    <property type="project" value="UniProtKB-UniRule"/>
</dbReference>
<dbReference type="GO" id="GO:0045948">
    <property type="term" value="P:positive regulation of translational initiation"/>
    <property type="evidence" value="ECO:0007669"/>
    <property type="project" value="UniProtKB-UniRule"/>
</dbReference>
<dbReference type="GO" id="GO:0006109">
    <property type="term" value="P:regulation of carbohydrate metabolic process"/>
    <property type="evidence" value="ECO:0007669"/>
    <property type="project" value="UniProtKB-UniRule"/>
</dbReference>
<dbReference type="FunFam" id="2.60.40.4380:FF:000001">
    <property type="entry name" value="Translational regulator CsrA"/>
    <property type="match status" value="1"/>
</dbReference>
<dbReference type="Gene3D" id="2.60.40.4380">
    <property type="entry name" value="Translational regulator CsrA"/>
    <property type="match status" value="1"/>
</dbReference>
<dbReference type="HAMAP" id="MF_00167">
    <property type="entry name" value="CsrA"/>
    <property type="match status" value="1"/>
</dbReference>
<dbReference type="InterPro" id="IPR003751">
    <property type="entry name" value="CsrA"/>
</dbReference>
<dbReference type="InterPro" id="IPR036107">
    <property type="entry name" value="CsrA_sf"/>
</dbReference>
<dbReference type="NCBIfam" id="TIGR00202">
    <property type="entry name" value="csrA"/>
    <property type="match status" value="1"/>
</dbReference>
<dbReference type="NCBIfam" id="NF002469">
    <property type="entry name" value="PRK01712.1"/>
    <property type="match status" value="1"/>
</dbReference>
<dbReference type="PANTHER" id="PTHR34984">
    <property type="entry name" value="CARBON STORAGE REGULATOR"/>
    <property type="match status" value="1"/>
</dbReference>
<dbReference type="PANTHER" id="PTHR34984:SF1">
    <property type="entry name" value="CARBON STORAGE REGULATOR"/>
    <property type="match status" value="1"/>
</dbReference>
<dbReference type="Pfam" id="PF02599">
    <property type="entry name" value="CsrA"/>
    <property type="match status" value="1"/>
</dbReference>
<dbReference type="SUPFAM" id="SSF117130">
    <property type="entry name" value="CsrA-like"/>
    <property type="match status" value="1"/>
</dbReference>
<gene>
    <name evidence="1" type="primary">csrA</name>
    <name type="ordered locus">Patl_3014</name>
</gene>
<accession>Q15RG6</accession>
<protein>
    <recommendedName>
        <fullName evidence="1">Translational regulator CsrA</fullName>
    </recommendedName>
    <alternativeName>
        <fullName evidence="1">Carbon storage regulator</fullName>
    </alternativeName>
</protein>
<evidence type="ECO:0000255" key="1">
    <source>
        <dbReference type="HAMAP-Rule" id="MF_00167"/>
    </source>
</evidence>
<reference key="1">
    <citation type="submission" date="2006-06" db="EMBL/GenBank/DDBJ databases">
        <title>Complete sequence of Pseudoalteromonas atlantica T6c.</title>
        <authorList>
            <consortium name="US DOE Joint Genome Institute"/>
            <person name="Copeland A."/>
            <person name="Lucas S."/>
            <person name="Lapidus A."/>
            <person name="Barry K."/>
            <person name="Detter J.C."/>
            <person name="Glavina del Rio T."/>
            <person name="Hammon N."/>
            <person name="Israni S."/>
            <person name="Dalin E."/>
            <person name="Tice H."/>
            <person name="Pitluck S."/>
            <person name="Saunders E."/>
            <person name="Brettin T."/>
            <person name="Bruce D."/>
            <person name="Han C."/>
            <person name="Tapia R."/>
            <person name="Gilna P."/>
            <person name="Schmutz J."/>
            <person name="Larimer F."/>
            <person name="Land M."/>
            <person name="Hauser L."/>
            <person name="Kyrpides N."/>
            <person name="Kim E."/>
            <person name="Karls A.C."/>
            <person name="Bartlett D."/>
            <person name="Higgins B.P."/>
            <person name="Richardson P."/>
        </authorList>
    </citation>
    <scope>NUCLEOTIDE SEQUENCE [LARGE SCALE GENOMIC DNA]</scope>
    <source>
        <strain>T6c / ATCC BAA-1087</strain>
    </source>
</reference>
<keyword id="KW-0010">Activator</keyword>
<keyword id="KW-0963">Cytoplasm</keyword>
<keyword id="KW-0678">Repressor</keyword>
<keyword id="KW-0694">RNA-binding</keyword>
<keyword id="KW-0810">Translation regulation</keyword>
<proteinExistence type="inferred from homology"/>
<comment type="function">
    <text evidence="1">A key translational regulator that binds mRNA to regulate translation initiation and/or mRNA stability. Mediates global changes in gene expression, shifting from rapid growth to stress survival by linking envelope stress, the stringent response and the catabolite repression systems. Usually binds in the 5'-UTR; binding at or near the Shine-Dalgarno sequence prevents ribosome-binding, repressing translation, binding elsewhere in the 5'-UTR can activate translation and/or stabilize the mRNA. Its function is antagonized by small RNA(s).</text>
</comment>
<comment type="subunit">
    <text evidence="1">Homodimer; the beta-strands of each monomer intercalate to form a hydrophobic core, while the alpha-helices form wings that extend away from the core.</text>
</comment>
<comment type="subcellular location">
    <subcellularLocation>
        <location evidence="1">Cytoplasm</location>
    </subcellularLocation>
</comment>
<comment type="similarity">
    <text evidence="1">Belongs to the CsrA/RsmA family.</text>
</comment>
<name>CSRA_PSEA6</name>
<sequence length="71" mass="7779">MLILTRRVGETLMVGDEVTVTVLGVKGNQVRIGVNAPKEVSVHREEIYMRIQAEKNGQLAGHDSSSSDEDN</sequence>